<proteinExistence type="inferred from homology"/>
<comment type="similarity">
    <text evidence="1">Belongs to the bacterial ribosomal protein bL33 family.</text>
</comment>
<gene>
    <name evidence="1" type="primary">rpmG</name>
    <name type="ordered locus">CTL0405</name>
</gene>
<evidence type="ECO:0000255" key="1">
    <source>
        <dbReference type="HAMAP-Rule" id="MF_00294"/>
    </source>
</evidence>
<evidence type="ECO:0000305" key="2"/>
<name>RL33_CHLT2</name>
<protein>
    <recommendedName>
        <fullName evidence="1">Large ribosomal subunit protein bL33</fullName>
    </recommendedName>
    <alternativeName>
        <fullName evidence="2">50S ribosomal protein L33</fullName>
    </alternativeName>
</protein>
<keyword id="KW-0687">Ribonucleoprotein</keyword>
<keyword id="KW-0689">Ribosomal protein</keyword>
<accession>B0B9Q8</accession>
<organism>
    <name type="scientific">Chlamydia trachomatis serovar L2 (strain ATCC VR-902B / DSM 19102 / 434/Bu)</name>
    <dbReference type="NCBI Taxonomy" id="471472"/>
    <lineage>
        <taxon>Bacteria</taxon>
        <taxon>Pseudomonadati</taxon>
        <taxon>Chlamydiota</taxon>
        <taxon>Chlamydiia</taxon>
        <taxon>Chlamydiales</taxon>
        <taxon>Chlamydiaceae</taxon>
        <taxon>Chlamydia/Chlamydophila group</taxon>
        <taxon>Chlamydia</taxon>
    </lineage>
</organism>
<feature type="chain" id="PRO_0000356425" description="Large ribosomal subunit protein bL33">
    <location>
        <begin position="1"/>
        <end position="52"/>
    </location>
</feature>
<sequence>MASKNREIIKLKSTESSEMYWTVKNKKKTSGRLELKKYDRKLRKHVIFKEAK</sequence>
<dbReference type="EMBL" id="AM884176">
    <property type="protein sequence ID" value="CAP03845.1"/>
    <property type="molecule type" value="Genomic_DNA"/>
</dbReference>
<dbReference type="RefSeq" id="WP_009873598.1">
    <property type="nucleotide sequence ID" value="NC_010287.1"/>
</dbReference>
<dbReference type="RefSeq" id="YP_001654489.1">
    <property type="nucleotide sequence ID" value="NC_010287.1"/>
</dbReference>
<dbReference type="SMR" id="B0B9Q8"/>
<dbReference type="KEGG" id="ctb:CTL0405"/>
<dbReference type="PATRIC" id="fig|471472.4.peg.437"/>
<dbReference type="HOGENOM" id="CLU_190949_1_1_0"/>
<dbReference type="Proteomes" id="UP001154402">
    <property type="component" value="Chromosome"/>
</dbReference>
<dbReference type="GO" id="GO:0022625">
    <property type="term" value="C:cytosolic large ribosomal subunit"/>
    <property type="evidence" value="ECO:0007669"/>
    <property type="project" value="TreeGrafter"/>
</dbReference>
<dbReference type="GO" id="GO:0003735">
    <property type="term" value="F:structural constituent of ribosome"/>
    <property type="evidence" value="ECO:0007669"/>
    <property type="project" value="InterPro"/>
</dbReference>
<dbReference type="GO" id="GO:0006412">
    <property type="term" value="P:translation"/>
    <property type="evidence" value="ECO:0007669"/>
    <property type="project" value="UniProtKB-UniRule"/>
</dbReference>
<dbReference type="FunFam" id="2.20.28.120:FF:000009">
    <property type="entry name" value="50S ribosomal protein L33"/>
    <property type="match status" value="1"/>
</dbReference>
<dbReference type="Gene3D" id="2.20.28.120">
    <property type="entry name" value="Ribosomal protein L33"/>
    <property type="match status" value="1"/>
</dbReference>
<dbReference type="HAMAP" id="MF_00294">
    <property type="entry name" value="Ribosomal_bL33"/>
    <property type="match status" value="1"/>
</dbReference>
<dbReference type="InterPro" id="IPR001705">
    <property type="entry name" value="Ribosomal_bL33"/>
</dbReference>
<dbReference type="InterPro" id="IPR018264">
    <property type="entry name" value="Ribosomal_bL33_CS"/>
</dbReference>
<dbReference type="InterPro" id="IPR038584">
    <property type="entry name" value="Ribosomal_bL33_sf"/>
</dbReference>
<dbReference type="InterPro" id="IPR011332">
    <property type="entry name" value="Ribosomal_zn-bd"/>
</dbReference>
<dbReference type="NCBIfam" id="NF001860">
    <property type="entry name" value="PRK00595.1"/>
    <property type="match status" value="1"/>
</dbReference>
<dbReference type="NCBIfam" id="TIGR01023">
    <property type="entry name" value="rpmG_bact"/>
    <property type="match status" value="1"/>
</dbReference>
<dbReference type="PANTHER" id="PTHR15238">
    <property type="entry name" value="54S RIBOSOMAL PROTEIN L39, MITOCHONDRIAL"/>
    <property type="match status" value="1"/>
</dbReference>
<dbReference type="PANTHER" id="PTHR15238:SF1">
    <property type="entry name" value="LARGE RIBOSOMAL SUBUNIT PROTEIN BL33M"/>
    <property type="match status" value="1"/>
</dbReference>
<dbReference type="Pfam" id="PF00471">
    <property type="entry name" value="Ribosomal_L33"/>
    <property type="match status" value="1"/>
</dbReference>
<dbReference type="SUPFAM" id="SSF57829">
    <property type="entry name" value="Zn-binding ribosomal proteins"/>
    <property type="match status" value="1"/>
</dbReference>
<dbReference type="PROSITE" id="PS00582">
    <property type="entry name" value="RIBOSOMAL_L33"/>
    <property type="match status" value="1"/>
</dbReference>
<reference key="1">
    <citation type="journal article" date="2008" name="Genome Res.">
        <title>Chlamydia trachomatis: genome sequence analysis of lymphogranuloma venereum isolates.</title>
        <authorList>
            <person name="Thomson N.R."/>
            <person name="Holden M.T.G."/>
            <person name="Carder C."/>
            <person name="Lennard N."/>
            <person name="Lockey S.J."/>
            <person name="Marsh P."/>
            <person name="Skipp P."/>
            <person name="O'Connor C.D."/>
            <person name="Goodhead I."/>
            <person name="Norbertzcak H."/>
            <person name="Harris B."/>
            <person name="Ormond D."/>
            <person name="Rance R."/>
            <person name="Quail M.A."/>
            <person name="Parkhill J."/>
            <person name="Stephens R.S."/>
            <person name="Clarke I.N."/>
        </authorList>
    </citation>
    <scope>NUCLEOTIDE SEQUENCE [LARGE SCALE GENOMIC DNA]</scope>
    <source>
        <strain>ATCC VR-902B / DSM 19102 / 434/Bu</strain>
    </source>
</reference>